<accession>P0DY03</accession>
<name>NDBP7_EUSVA</name>
<reference key="1">
    <citation type="journal article" date="2018" name="Theranostics">
        <title>Histidine-rich modification of a scorpion-derived peptide improves bioavailability and inhibitory activity against HSV-1.</title>
        <authorList>
            <person name="Zeng Z."/>
            <person name="Zhang R."/>
            <person name="Hong W."/>
            <person name="Cheng Y."/>
            <person name="Wang H."/>
            <person name="Lang Y."/>
            <person name="Ji Z."/>
            <person name="Wu Y."/>
            <person name="Li W."/>
            <person name="Xie Y."/>
            <person name="Cao Z."/>
        </authorList>
    </citation>
    <scope>NUCLEOTIDE SEQUENCE [MRNA]</scope>
    <scope>SYNTHESIS OF 23-36</scope>
    <scope>PROBABLE AMIDATION AT LEU-36</scope>
    <source>
        <tissue>Venom gland</tissue>
    </source>
</reference>
<dbReference type="GO" id="GO:0005576">
    <property type="term" value="C:extracellular region"/>
    <property type="evidence" value="ECO:0007669"/>
    <property type="project" value="UniProtKB-SubCell"/>
</dbReference>
<keyword id="KW-0027">Amidation</keyword>
<keyword id="KW-0929">Antimicrobial</keyword>
<keyword id="KW-0165">Cleavage on pair of basic residues</keyword>
<keyword id="KW-0964">Secreted</keyword>
<keyword id="KW-0732">Signal</keyword>
<proteinExistence type="evidence at protein level"/>
<comment type="function">
    <text evidence="2">Probable antimicrobial peptide. Has no inhibitory activity against herpes simplex virus type 1 (HSV-1).</text>
</comment>
<comment type="subcellular location">
    <subcellularLocation>
        <location evidence="5">Secreted</location>
    </subcellularLocation>
</comment>
<comment type="tissue specificity">
    <text evidence="5">Expressed by the venom gland.</text>
</comment>
<comment type="similarity">
    <text evidence="4">Belongs to the non-disulfide-bridged peptide (NDBP) superfamily. Short antimicrobial peptide (group 4) family.</text>
</comment>
<protein>
    <recommendedName>
        <fullName evidence="3">Antimicrobial peptide Eval967</fullName>
    </recommendedName>
</protein>
<evidence type="ECO:0000255" key="1"/>
<evidence type="ECO:0000269" key="2">
    <source>
    </source>
</evidence>
<evidence type="ECO:0000303" key="3">
    <source>
    </source>
</evidence>
<evidence type="ECO:0000305" key="4"/>
<evidence type="ECO:0000305" key="5">
    <source>
    </source>
</evidence>
<organism>
    <name type="scientific">Euscorpiops validus</name>
    <name type="common">Scorpion</name>
    <dbReference type="NCBI Taxonomy" id="1643527"/>
    <lineage>
        <taxon>Eukaryota</taxon>
        <taxon>Metazoa</taxon>
        <taxon>Ecdysozoa</taxon>
        <taxon>Arthropoda</taxon>
        <taxon>Chelicerata</taxon>
        <taxon>Arachnida</taxon>
        <taxon>Scorpiones</taxon>
        <taxon>Iurida</taxon>
        <taxon>Chactoidea</taxon>
        <taxon>Euscorpiidae</taxon>
        <taxon>Scorpiopinae</taxon>
        <taxon>Scorpiopini</taxon>
        <taxon>Euscorpiops</taxon>
    </lineage>
</organism>
<feature type="signal peptide" evidence="1">
    <location>
        <begin position="1"/>
        <end position="22"/>
    </location>
</feature>
<feature type="peptide" id="PRO_0000461883" description="Antimicrobial peptide Eval967" evidence="5">
    <location>
        <begin position="23"/>
        <end position="36"/>
    </location>
</feature>
<feature type="propeptide" id="PRO_0000461884" evidence="5">
    <location>
        <begin position="37"/>
        <end position="66"/>
    </location>
</feature>
<feature type="modified residue" description="Leucine amide" evidence="5">
    <location>
        <position position="36"/>
    </location>
</feature>
<sequence length="66" mass="7542">MKFSALLPVFFLLLAVIDYCQAFAFLAAIPSILSALGKRDVKTQKYVDIKRRDLDLDDMLSKLFED</sequence>